<dbReference type="EC" id="2.1.1.-" evidence="1 3 4 5 7"/>
<dbReference type="EMBL" id="AF201938">
    <property type="protein sequence ID" value="AAF86874.1"/>
    <property type="molecule type" value="mRNA"/>
</dbReference>
<dbReference type="EMBL" id="AK001321">
    <property type="protein sequence ID" value="BAA91622.1"/>
    <property type="molecule type" value="mRNA"/>
</dbReference>
<dbReference type="EMBL" id="AC009967">
    <property type="protein sequence ID" value="AAY14869.1"/>
    <property type="molecule type" value="Genomic_DNA"/>
</dbReference>
<dbReference type="EMBL" id="CH471058">
    <property type="protein sequence ID" value="EAX11254.1"/>
    <property type="molecule type" value="Genomic_DNA"/>
</dbReference>
<dbReference type="EMBL" id="CH471058">
    <property type="protein sequence ID" value="EAX11255.1"/>
    <property type="molecule type" value="Genomic_DNA"/>
</dbReference>
<dbReference type="EMBL" id="BC093014">
    <property type="protein sequence ID" value="AAH93014.1"/>
    <property type="molecule type" value="mRNA"/>
</dbReference>
<dbReference type="EMBL" id="BC000921">
    <property type="protein sequence ID" value="AAH00921.1"/>
    <property type="molecule type" value="mRNA"/>
</dbReference>
<dbReference type="CCDS" id="CCDS33320.1"/>
<dbReference type="RefSeq" id="NP_001280115.1">
    <property type="nucleotide sequence ID" value="NM_001293186.2"/>
</dbReference>
<dbReference type="RefSeq" id="NP_001280116.1">
    <property type="nucleotide sequence ID" value="NM_001293187.2"/>
</dbReference>
<dbReference type="RefSeq" id="NP_054887.2">
    <property type="nucleotide sequence ID" value="NM_014168.4"/>
</dbReference>
<dbReference type="PDB" id="6H2U">
    <property type="method" value="X-ray"/>
    <property type="resolution" value="1.60 A"/>
    <property type="chains" value="A=1-209"/>
</dbReference>
<dbReference type="PDB" id="6H2V">
    <property type="method" value="X-ray"/>
    <property type="resolution" value="2.49 A"/>
    <property type="chains" value="A/C=1-209"/>
</dbReference>
<dbReference type="PDBsum" id="6H2U"/>
<dbReference type="PDBsum" id="6H2V"/>
<dbReference type="SMR" id="Q9NRN9"/>
<dbReference type="BioGRID" id="118851">
    <property type="interactions" value="16"/>
</dbReference>
<dbReference type="ComplexPortal" id="CPX-2850">
    <property type="entry name" value="METTL5-TRM112 methyltransferase complex"/>
</dbReference>
<dbReference type="FunCoup" id="Q9NRN9">
    <property type="interactions" value="1970"/>
</dbReference>
<dbReference type="IntAct" id="Q9NRN9">
    <property type="interactions" value="3"/>
</dbReference>
<dbReference type="STRING" id="9606.ENSP00000260953"/>
<dbReference type="ChEMBL" id="CHEMBL5483089"/>
<dbReference type="iPTMnet" id="Q9NRN9"/>
<dbReference type="PhosphoSitePlus" id="Q9NRN9"/>
<dbReference type="BioMuta" id="METTL5"/>
<dbReference type="DMDM" id="74761664"/>
<dbReference type="jPOST" id="Q9NRN9"/>
<dbReference type="MassIVE" id="Q9NRN9"/>
<dbReference type="PaxDb" id="9606-ENSP00000260953"/>
<dbReference type="PeptideAtlas" id="Q9NRN9"/>
<dbReference type="ProteomicsDB" id="82397"/>
<dbReference type="Pumba" id="Q9NRN9"/>
<dbReference type="Antibodypedia" id="35324">
    <property type="antibodies" value="83 antibodies from 20 providers"/>
</dbReference>
<dbReference type="DNASU" id="29081"/>
<dbReference type="Ensembl" id="ENST00000260953.10">
    <property type="protein sequence ID" value="ENSP00000260953.5"/>
    <property type="gene ID" value="ENSG00000138382.15"/>
</dbReference>
<dbReference type="Ensembl" id="ENST00000392640.6">
    <property type="protein sequence ID" value="ENSP00000376415.2"/>
    <property type="gene ID" value="ENSG00000138382.15"/>
</dbReference>
<dbReference type="Ensembl" id="ENST00000409965.5">
    <property type="protein sequence ID" value="ENSP00000386582.1"/>
    <property type="gene ID" value="ENSG00000138382.15"/>
</dbReference>
<dbReference type="GeneID" id="29081"/>
<dbReference type="KEGG" id="hsa:29081"/>
<dbReference type="MANE-Select" id="ENST00000260953.10">
    <property type="protein sequence ID" value="ENSP00000260953.5"/>
    <property type="RefSeq nucleotide sequence ID" value="NM_014168.4"/>
    <property type="RefSeq protein sequence ID" value="NP_054887.2"/>
</dbReference>
<dbReference type="UCSC" id="uc002ufn.4">
    <property type="organism name" value="human"/>
</dbReference>
<dbReference type="AGR" id="HGNC:25006"/>
<dbReference type="CTD" id="29081"/>
<dbReference type="DisGeNET" id="29081"/>
<dbReference type="GeneCards" id="METTL5"/>
<dbReference type="HGNC" id="HGNC:25006">
    <property type="gene designation" value="METTL5"/>
</dbReference>
<dbReference type="HPA" id="ENSG00000138382">
    <property type="expression patterns" value="Low tissue specificity"/>
</dbReference>
<dbReference type="MalaCards" id="METTL5"/>
<dbReference type="MIM" id="618628">
    <property type="type" value="gene"/>
</dbReference>
<dbReference type="MIM" id="618665">
    <property type="type" value="phenotype"/>
</dbReference>
<dbReference type="neXtProt" id="NX_Q9NRN9"/>
<dbReference type="OpenTargets" id="ENSG00000138382"/>
<dbReference type="Orphanet" id="2512">
    <property type="disease" value="Autosomal recessive primary microcephaly"/>
</dbReference>
<dbReference type="PharmGKB" id="PA142671461"/>
<dbReference type="VEuPathDB" id="HostDB:ENSG00000138382"/>
<dbReference type="eggNOG" id="KOG3420">
    <property type="taxonomic scope" value="Eukaryota"/>
</dbReference>
<dbReference type="GeneTree" id="ENSGT00390000000227"/>
<dbReference type="HOGENOM" id="CLU_074702_1_1_1"/>
<dbReference type="InParanoid" id="Q9NRN9"/>
<dbReference type="OMA" id="DVVYSIH"/>
<dbReference type="OrthoDB" id="419617at2759"/>
<dbReference type="PAN-GO" id="Q9NRN9">
    <property type="GO annotations" value="2 GO annotations based on evolutionary models"/>
</dbReference>
<dbReference type="PhylomeDB" id="Q9NRN9"/>
<dbReference type="TreeFam" id="TF314953"/>
<dbReference type="PathwayCommons" id="Q9NRN9"/>
<dbReference type="SignaLink" id="Q9NRN9"/>
<dbReference type="BioGRID-ORCS" id="29081">
    <property type="hits" value="69 hits in 1134 CRISPR screens"/>
</dbReference>
<dbReference type="CD-CODE" id="91857CE7">
    <property type="entry name" value="Nucleolus"/>
</dbReference>
<dbReference type="ChiTaRS" id="METTL5">
    <property type="organism name" value="human"/>
</dbReference>
<dbReference type="GenomeRNAi" id="29081"/>
<dbReference type="Pharos" id="Q9NRN9">
    <property type="development level" value="Tbio"/>
</dbReference>
<dbReference type="PRO" id="PR:Q9NRN9"/>
<dbReference type="Proteomes" id="UP000005640">
    <property type="component" value="Chromosome 2"/>
</dbReference>
<dbReference type="RNAct" id="Q9NRN9">
    <property type="molecule type" value="protein"/>
</dbReference>
<dbReference type="Bgee" id="ENSG00000138382">
    <property type="expression patterns" value="Expressed in skeletal muscle tissue of biceps brachii and 205 other cell types or tissues"/>
</dbReference>
<dbReference type="ExpressionAtlas" id="Q9NRN9">
    <property type="expression patterns" value="baseline and differential"/>
</dbReference>
<dbReference type="GO" id="GO:0042995">
    <property type="term" value="C:cell projection"/>
    <property type="evidence" value="ECO:0007669"/>
    <property type="project" value="UniProtKB-KW"/>
</dbReference>
<dbReference type="GO" id="GO:0005829">
    <property type="term" value="C:cytosol"/>
    <property type="evidence" value="ECO:0000314"/>
    <property type="project" value="HPA"/>
</dbReference>
<dbReference type="GO" id="GO:0001650">
    <property type="term" value="C:fibrillar center"/>
    <property type="evidence" value="ECO:0000314"/>
    <property type="project" value="HPA"/>
</dbReference>
<dbReference type="GO" id="GO:0005730">
    <property type="term" value="C:nucleolus"/>
    <property type="evidence" value="ECO:0000314"/>
    <property type="project" value="HPA"/>
</dbReference>
<dbReference type="GO" id="GO:0005634">
    <property type="term" value="C:nucleus"/>
    <property type="evidence" value="ECO:0000314"/>
    <property type="project" value="UniProtKB"/>
</dbReference>
<dbReference type="GO" id="GO:0098794">
    <property type="term" value="C:postsynapse"/>
    <property type="evidence" value="ECO:0000314"/>
    <property type="project" value="UniProtKB"/>
</dbReference>
<dbReference type="GO" id="GO:0098793">
    <property type="term" value="C:presynapse"/>
    <property type="evidence" value="ECO:0000314"/>
    <property type="project" value="UniProtKB"/>
</dbReference>
<dbReference type="GO" id="GO:0003676">
    <property type="term" value="F:nucleic acid binding"/>
    <property type="evidence" value="ECO:0007669"/>
    <property type="project" value="InterPro"/>
</dbReference>
<dbReference type="GO" id="GO:0008988">
    <property type="term" value="F:rRNA (adenine-N6-)-methyltransferase activity"/>
    <property type="evidence" value="ECO:0000314"/>
    <property type="project" value="UniProtKB"/>
</dbReference>
<dbReference type="GO" id="GO:1904047">
    <property type="term" value="F:S-adenosyl-L-methionine binding"/>
    <property type="evidence" value="ECO:0000314"/>
    <property type="project" value="UniProtKB"/>
</dbReference>
<dbReference type="GO" id="GO:0045727">
    <property type="term" value="P:positive regulation of translation"/>
    <property type="evidence" value="ECO:0000315"/>
    <property type="project" value="UniProtKB"/>
</dbReference>
<dbReference type="GO" id="GO:0031167">
    <property type="term" value="P:rRNA methylation"/>
    <property type="evidence" value="ECO:0000314"/>
    <property type="project" value="UniProtKB"/>
</dbReference>
<dbReference type="GO" id="GO:0006364">
    <property type="term" value="P:rRNA processing"/>
    <property type="evidence" value="ECO:0000314"/>
    <property type="project" value="UniProtKB"/>
</dbReference>
<dbReference type="GO" id="GO:0048863">
    <property type="term" value="P:stem cell differentiation"/>
    <property type="evidence" value="ECO:0000250"/>
    <property type="project" value="UniProtKB"/>
</dbReference>
<dbReference type="CDD" id="cd02440">
    <property type="entry name" value="AdoMet_MTases"/>
    <property type="match status" value="1"/>
</dbReference>
<dbReference type="Gene3D" id="3.40.50.150">
    <property type="entry name" value="Vaccinia Virus protein VP39"/>
    <property type="match status" value="1"/>
</dbReference>
<dbReference type="InterPro" id="IPR002052">
    <property type="entry name" value="DNA_methylase_N6_adenine_CS"/>
</dbReference>
<dbReference type="InterPro" id="IPR051720">
    <property type="entry name" value="rRNA_MeTrfase/Polyamine_Synth"/>
</dbReference>
<dbReference type="InterPro" id="IPR029063">
    <property type="entry name" value="SAM-dependent_MTases_sf"/>
</dbReference>
<dbReference type="InterPro" id="IPR007848">
    <property type="entry name" value="Small_mtfrase_dom"/>
</dbReference>
<dbReference type="PANTHER" id="PTHR23290">
    <property type="entry name" value="RRNA N6-ADENOSINE-METHYLTRANSFERASE METTL5"/>
    <property type="match status" value="1"/>
</dbReference>
<dbReference type="PANTHER" id="PTHR23290:SF0">
    <property type="entry name" value="RRNA N6-ADENOSINE-METHYLTRANSFERASE METTL5"/>
    <property type="match status" value="1"/>
</dbReference>
<dbReference type="Pfam" id="PF05175">
    <property type="entry name" value="MTS"/>
    <property type="match status" value="1"/>
</dbReference>
<dbReference type="SUPFAM" id="SSF53335">
    <property type="entry name" value="S-adenosyl-L-methionine-dependent methyltransferases"/>
    <property type="match status" value="1"/>
</dbReference>
<dbReference type="PROSITE" id="PS00092">
    <property type="entry name" value="N6_MTASE"/>
    <property type="match status" value="1"/>
</dbReference>
<feature type="chain" id="PRO_0000251919" description="rRNA N(6)-adenosine-methyltransferase METTL5">
    <location>
        <begin position="1"/>
        <end position="209"/>
    </location>
</feature>
<feature type="binding site" evidence="1 12 13">
    <location>
        <position position="28"/>
    </location>
    <ligand>
        <name>S-adenosyl-L-methionine</name>
        <dbReference type="ChEBI" id="CHEBI:59789"/>
    </ligand>
</feature>
<feature type="binding site" evidence="1 12 13">
    <location>
        <position position="31"/>
    </location>
    <ligand>
        <name>S-adenosyl-L-methionine</name>
        <dbReference type="ChEBI" id="CHEBI:59789"/>
    </ligand>
</feature>
<feature type="binding site" evidence="1 12 13">
    <location>
        <position position="59"/>
    </location>
    <ligand>
        <name>S-adenosyl-L-methionine</name>
        <dbReference type="ChEBI" id="CHEBI:59789"/>
    </ligand>
</feature>
<feature type="binding site" evidence="1 12">
    <location>
        <position position="62"/>
    </location>
    <ligand>
        <name>S-adenosyl-L-methionine</name>
        <dbReference type="ChEBI" id="CHEBI:59789"/>
    </ligand>
</feature>
<feature type="binding site" evidence="1 13">
    <location>
        <position position="64"/>
    </location>
    <ligand>
        <name>S-adenosyl-L-methionine</name>
        <dbReference type="ChEBI" id="CHEBI:59789"/>
    </ligand>
</feature>
<feature type="binding site" evidence="1 12 13">
    <location>
        <position position="81"/>
    </location>
    <ligand>
        <name>S-adenosyl-L-methionine</name>
        <dbReference type="ChEBI" id="CHEBI:59789"/>
    </ligand>
</feature>
<feature type="binding site" evidence="1 12 13">
    <location>
        <begin position="108"/>
        <end position="109"/>
    </location>
    <ligand>
        <name>S-adenosyl-L-methionine</name>
        <dbReference type="ChEBI" id="CHEBI:59789"/>
    </ligand>
</feature>
<feature type="sequence variant" id="VAR_086154" description="Found in patients with intellectual disability and microcephaly; uncertain significance; impaired interaction with TRMT112." evidence="7">
    <original>G</original>
    <variation>D</variation>
    <location>
        <position position="61"/>
    </location>
</feature>
<feature type="sequence variant" id="VAR_051507" description="In dbSNP:rs1051387.">
    <original>V</original>
    <variation>G</variation>
    <location>
        <position position="202"/>
    </location>
</feature>
<feature type="mutagenesis site" description="In METTL5-3A; abolished methyltransferase activity." evidence="7">
    <original>NPP</original>
    <variation>AAA</variation>
    <location>
        <begin position="126"/>
        <end position="128"/>
    </location>
</feature>
<feature type="sequence conflict" description="In Ref. 2; BAA91622." evidence="10" ref="2">
    <original>E</original>
    <variation>G</variation>
    <location>
        <position position="27"/>
    </location>
</feature>
<feature type="helix" evidence="14">
    <location>
        <begin position="6"/>
        <end position="13"/>
    </location>
</feature>
<feature type="turn" evidence="14">
    <location>
        <begin position="24"/>
        <end position="27"/>
    </location>
</feature>
<feature type="helix" evidence="14">
    <location>
        <begin position="33"/>
        <end position="45"/>
    </location>
</feature>
<feature type="strand" evidence="14">
    <location>
        <begin position="54"/>
        <end position="59"/>
    </location>
</feature>
<feature type="helix" evidence="14">
    <location>
        <begin position="64"/>
        <end position="71"/>
    </location>
</feature>
<feature type="strand" evidence="14">
    <location>
        <begin position="75"/>
        <end position="82"/>
    </location>
</feature>
<feature type="helix" evidence="14">
    <location>
        <begin position="84"/>
        <end position="97"/>
    </location>
</feature>
<feature type="strand" evidence="14">
    <location>
        <begin position="101"/>
        <end position="106"/>
    </location>
</feature>
<feature type="helix" evidence="14">
    <location>
        <begin position="109"/>
        <end position="111"/>
    </location>
</feature>
<feature type="helix" evidence="14">
    <location>
        <begin position="114"/>
        <end position="116"/>
    </location>
</feature>
<feature type="strand" evidence="14">
    <location>
        <begin position="120"/>
        <end position="125"/>
    </location>
</feature>
<feature type="helix" evidence="14">
    <location>
        <begin position="137"/>
        <end position="148"/>
    </location>
</feature>
<feature type="strand" evidence="14">
    <location>
        <begin position="149"/>
        <end position="159"/>
    </location>
</feature>
<feature type="helix" evidence="14">
    <location>
        <begin position="162"/>
        <end position="172"/>
    </location>
</feature>
<feature type="strand" evidence="14">
    <location>
        <begin position="175"/>
        <end position="184"/>
    </location>
</feature>
<feature type="strand" evidence="14">
    <location>
        <begin position="195"/>
        <end position="197"/>
    </location>
</feature>
<feature type="strand" evidence="14">
    <location>
        <begin position="199"/>
        <end position="208"/>
    </location>
</feature>
<proteinExistence type="evidence at protein level"/>
<evidence type="ECO:0000269" key="1">
    <source>
    </source>
</evidence>
<evidence type="ECO:0000269" key="2">
    <source>
    </source>
</evidence>
<evidence type="ECO:0000269" key="3">
    <source>
    </source>
</evidence>
<evidence type="ECO:0000269" key="4">
    <source>
    </source>
</evidence>
<evidence type="ECO:0000269" key="5">
    <source>
    </source>
</evidence>
<evidence type="ECO:0000269" key="6">
    <source>
    </source>
</evidence>
<evidence type="ECO:0000269" key="7">
    <source>
    </source>
</evidence>
<evidence type="ECO:0000303" key="8">
    <source>
    </source>
</evidence>
<evidence type="ECO:0000303" key="9">
    <source ref="1"/>
</evidence>
<evidence type="ECO:0000305" key="10"/>
<evidence type="ECO:0000312" key="11">
    <source>
        <dbReference type="HGNC" id="HGNC:25006"/>
    </source>
</evidence>
<evidence type="ECO:0007744" key="12">
    <source>
        <dbReference type="PDB" id="6H2U"/>
    </source>
</evidence>
<evidence type="ECO:0007744" key="13">
    <source>
        <dbReference type="PDB" id="6H2V"/>
    </source>
</evidence>
<evidence type="ECO:0007829" key="14">
    <source>
        <dbReference type="PDB" id="6H2V"/>
    </source>
</evidence>
<sequence length="209" mass="23719">MKKVRLKELESRLQQVDGFEKPKLLLEQYPTRPHIAACMLYTIHNTYDDIENKVVADLGCGCGVLSIGTAMLGAGLCVGFDIDEDALEIFNRNAEEFELTNIDMVQCDVCLLSNRMSKSFDTVIMNPPFGTKNNKGTDMAFLKTALEMARTAVYSLHKSSTREHVQKKAAEWKIKIDIIAELRYDLPASYKFHKKKSVDIEVDLIRFSF</sequence>
<keyword id="KW-0002">3D-structure</keyword>
<keyword id="KW-0966">Cell projection</keyword>
<keyword id="KW-0991">Intellectual disability</keyword>
<keyword id="KW-0489">Methyltransferase</keyword>
<keyword id="KW-0539">Nucleus</keyword>
<keyword id="KW-1267">Proteomics identification</keyword>
<keyword id="KW-1185">Reference proteome</keyword>
<keyword id="KW-0949">S-adenosyl-L-methionine</keyword>
<keyword id="KW-0770">Synapse</keyword>
<keyword id="KW-0808">Transferase</keyword>
<protein>
    <recommendedName>
        <fullName evidence="10">rRNA N(6)-adenosine-methyltransferase METTL5</fullName>
        <ecNumber evidence="1 3 4 5 7">2.1.1.-</ecNumber>
    </recommendedName>
    <alternativeName>
        <fullName evidence="8">Methyltransferase-like protein 5</fullName>
    </alternativeName>
</protein>
<gene>
    <name evidence="8 11" type="primary">METTL5</name>
    <name evidence="9" type="ORF">DC3</name>
    <name type="ORF">HSPC133</name>
</gene>
<accession>Q9NRN9</accession>
<accession>D3DPC9</accession>
<accession>Q9NVX1</accession>
<organism>
    <name type="scientific">Homo sapiens</name>
    <name type="common">Human</name>
    <dbReference type="NCBI Taxonomy" id="9606"/>
    <lineage>
        <taxon>Eukaryota</taxon>
        <taxon>Metazoa</taxon>
        <taxon>Chordata</taxon>
        <taxon>Craniata</taxon>
        <taxon>Vertebrata</taxon>
        <taxon>Euteleostomi</taxon>
        <taxon>Mammalia</taxon>
        <taxon>Eutheria</taxon>
        <taxon>Euarchontoglires</taxon>
        <taxon>Primates</taxon>
        <taxon>Haplorrhini</taxon>
        <taxon>Catarrhini</taxon>
        <taxon>Hominidae</taxon>
        <taxon>Homo</taxon>
    </lineage>
</organism>
<reference key="1">
    <citation type="submission" date="1999-11" db="EMBL/GenBank/DDBJ databases">
        <title>A novel gene from human dendritic cells.</title>
        <authorList>
            <person name="Peng Y."/>
            <person name="Li Y."/>
            <person name="Tu Y."/>
            <person name="Xu S."/>
            <person name="Han Z."/>
            <person name="Fu G."/>
            <person name="Chen Z."/>
        </authorList>
    </citation>
    <scope>NUCLEOTIDE SEQUENCE [LARGE SCALE MRNA]</scope>
    <source>
        <tissue>Dendritic cell</tissue>
    </source>
</reference>
<reference key="2">
    <citation type="journal article" date="2004" name="Nat. Genet.">
        <title>Complete sequencing and characterization of 21,243 full-length human cDNAs.</title>
        <authorList>
            <person name="Ota T."/>
            <person name="Suzuki Y."/>
            <person name="Nishikawa T."/>
            <person name="Otsuki T."/>
            <person name="Sugiyama T."/>
            <person name="Irie R."/>
            <person name="Wakamatsu A."/>
            <person name="Hayashi K."/>
            <person name="Sato H."/>
            <person name="Nagai K."/>
            <person name="Kimura K."/>
            <person name="Makita H."/>
            <person name="Sekine M."/>
            <person name="Obayashi M."/>
            <person name="Nishi T."/>
            <person name="Shibahara T."/>
            <person name="Tanaka T."/>
            <person name="Ishii S."/>
            <person name="Yamamoto J."/>
            <person name="Saito K."/>
            <person name="Kawai Y."/>
            <person name="Isono Y."/>
            <person name="Nakamura Y."/>
            <person name="Nagahari K."/>
            <person name="Murakami K."/>
            <person name="Yasuda T."/>
            <person name="Iwayanagi T."/>
            <person name="Wagatsuma M."/>
            <person name="Shiratori A."/>
            <person name="Sudo H."/>
            <person name="Hosoiri T."/>
            <person name="Kaku Y."/>
            <person name="Kodaira H."/>
            <person name="Kondo H."/>
            <person name="Sugawara M."/>
            <person name="Takahashi M."/>
            <person name="Kanda K."/>
            <person name="Yokoi T."/>
            <person name="Furuya T."/>
            <person name="Kikkawa E."/>
            <person name="Omura Y."/>
            <person name="Abe K."/>
            <person name="Kamihara K."/>
            <person name="Katsuta N."/>
            <person name="Sato K."/>
            <person name="Tanikawa M."/>
            <person name="Yamazaki M."/>
            <person name="Ninomiya K."/>
            <person name="Ishibashi T."/>
            <person name="Yamashita H."/>
            <person name="Murakawa K."/>
            <person name="Fujimori K."/>
            <person name="Tanai H."/>
            <person name="Kimata M."/>
            <person name="Watanabe M."/>
            <person name="Hiraoka S."/>
            <person name="Chiba Y."/>
            <person name="Ishida S."/>
            <person name="Ono Y."/>
            <person name="Takiguchi S."/>
            <person name="Watanabe S."/>
            <person name="Yosida M."/>
            <person name="Hotuta T."/>
            <person name="Kusano J."/>
            <person name="Kanehori K."/>
            <person name="Takahashi-Fujii A."/>
            <person name="Hara H."/>
            <person name="Tanase T.-O."/>
            <person name="Nomura Y."/>
            <person name="Togiya S."/>
            <person name="Komai F."/>
            <person name="Hara R."/>
            <person name="Takeuchi K."/>
            <person name="Arita M."/>
            <person name="Imose N."/>
            <person name="Musashino K."/>
            <person name="Yuuki H."/>
            <person name="Oshima A."/>
            <person name="Sasaki N."/>
            <person name="Aotsuka S."/>
            <person name="Yoshikawa Y."/>
            <person name="Matsunawa H."/>
            <person name="Ichihara T."/>
            <person name="Shiohata N."/>
            <person name="Sano S."/>
            <person name="Moriya S."/>
            <person name="Momiyama H."/>
            <person name="Satoh N."/>
            <person name="Takami S."/>
            <person name="Terashima Y."/>
            <person name="Suzuki O."/>
            <person name="Nakagawa S."/>
            <person name="Senoh A."/>
            <person name="Mizoguchi H."/>
            <person name="Goto Y."/>
            <person name="Shimizu F."/>
            <person name="Wakebe H."/>
            <person name="Hishigaki H."/>
            <person name="Watanabe T."/>
            <person name="Sugiyama A."/>
            <person name="Takemoto M."/>
            <person name="Kawakami B."/>
            <person name="Yamazaki M."/>
            <person name="Watanabe K."/>
            <person name="Kumagai A."/>
            <person name="Itakura S."/>
            <person name="Fukuzumi Y."/>
            <person name="Fujimori Y."/>
            <person name="Komiyama M."/>
            <person name="Tashiro H."/>
            <person name="Tanigami A."/>
            <person name="Fujiwara T."/>
            <person name="Ono T."/>
            <person name="Yamada K."/>
            <person name="Fujii Y."/>
            <person name="Ozaki K."/>
            <person name="Hirao M."/>
            <person name="Ohmori Y."/>
            <person name="Kawabata A."/>
            <person name="Hikiji T."/>
            <person name="Kobatake N."/>
            <person name="Inagaki H."/>
            <person name="Ikema Y."/>
            <person name="Okamoto S."/>
            <person name="Okitani R."/>
            <person name="Kawakami T."/>
            <person name="Noguchi S."/>
            <person name="Itoh T."/>
            <person name="Shigeta K."/>
            <person name="Senba T."/>
            <person name="Matsumura K."/>
            <person name="Nakajima Y."/>
            <person name="Mizuno T."/>
            <person name="Morinaga M."/>
            <person name="Sasaki M."/>
            <person name="Togashi T."/>
            <person name="Oyama M."/>
            <person name="Hata H."/>
            <person name="Watanabe M."/>
            <person name="Komatsu T."/>
            <person name="Mizushima-Sugano J."/>
            <person name="Satoh T."/>
            <person name="Shirai Y."/>
            <person name="Takahashi Y."/>
            <person name="Nakagawa K."/>
            <person name="Okumura K."/>
            <person name="Nagase T."/>
            <person name="Nomura N."/>
            <person name="Kikuchi H."/>
            <person name="Masuho Y."/>
            <person name="Yamashita R."/>
            <person name="Nakai K."/>
            <person name="Yada T."/>
            <person name="Nakamura Y."/>
            <person name="Ohara O."/>
            <person name="Isogai T."/>
            <person name="Sugano S."/>
        </authorList>
    </citation>
    <scope>NUCLEOTIDE SEQUENCE [LARGE SCALE MRNA]</scope>
    <source>
        <tissue>Teratocarcinoma</tissue>
    </source>
</reference>
<reference key="3">
    <citation type="journal article" date="2005" name="Nature">
        <title>Generation and annotation of the DNA sequences of human chromosomes 2 and 4.</title>
        <authorList>
            <person name="Hillier L.W."/>
            <person name="Graves T.A."/>
            <person name="Fulton R.S."/>
            <person name="Fulton L.A."/>
            <person name="Pepin K.H."/>
            <person name="Minx P."/>
            <person name="Wagner-McPherson C."/>
            <person name="Layman D."/>
            <person name="Wylie K."/>
            <person name="Sekhon M."/>
            <person name="Becker M.C."/>
            <person name="Fewell G.A."/>
            <person name="Delehaunty K.D."/>
            <person name="Miner T.L."/>
            <person name="Nash W.E."/>
            <person name="Kremitzki C."/>
            <person name="Oddy L."/>
            <person name="Du H."/>
            <person name="Sun H."/>
            <person name="Bradshaw-Cordum H."/>
            <person name="Ali J."/>
            <person name="Carter J."/>
            <person name="Cordes M."/>
            <person name="Harris A."/>
            <person name="Isak A."/>
            <person name="van Brunt A."/>
            <person name="Nguyen C."/>
            <person name="Du F."/>
            <person name="Courtney L."/>
            <person name="Kalicki J."/>
            <person name="Ozersky P."/>
            <person name="Abbott S."/>
            <person name="Armstrong J."/>
            <person name="Belter E.A."/>
            <person name="Caruso L."/>
            <person name="Cedroni M."/>
            <person name="Cotton M."/>
            <person name="Davidson T."/>
            <person name="Desai A."/>
            <person name="Elliott G."/>
            <person name="Erb T."/>
            <person name="Fronick C."/>
            <person name="Gaige T."/>
            <person name="Haakenson W."/>
            <person name="Haglund K."/>
            <person name="Holmes A."/>
            <person name="Harkins R."/>
            <person name="Kim K."/>
            <person name="Kruchowski S.S."/>
            <person name="Strong C.M."/>
            <person name="Grewal N."/>
            <person name="Goyea E."/>
            <person name="Hou S."/>
            <person name="Levy A."/>
            <person name="Martinka S."/>
            <person name="Mead K."/>
            <person name="McLellan M.D."/>
            <person name="Meyer R."/>
            <person name="Randall-Maher J."/>
            <person name="Tomlinson C."/>
            <person name="Dauphin-Kohlberg S."/>
            <person name="Kozlowicz-Reilly A."/>
            <person name="Shah N."/>
            <person name="Swearengen-Shahid S."/>
            <person name="Snider J."/>
            <person name="Strong J.T."/>
            <person name="Thompson J."/>
            <person name="Yoakum M."/>
            <person name="Leonard S."/>
            <person name="Pearman C."/>
            <person name="Trani L."/>
            <person name="Radionenko M."/>
            <person name="Waligorski J.E."/>
            <person name="Wang C."/>
            <person name="Rock S.M."/>
            <person name="Tin-Wollam A.-M."/>
            <person name="Maupin R."/>
            <person name="Latreille P."/>
            <person name="Wendl M.C."/>
            <person name="Yang S.-P."/>
            <person name="Pohl C."/>
            <person name="Wallis J.W."/>
            <person name="Spieth J."/>
            <person name="Bieri T.A."/>
            <person name="Berkowicz N."/>
            <person name="Nelson J.O."/>
            <person name="Osborne J."/>
            <person name="Ding L."/>
            <person name="Meyer R."/>
            <person name="Sabo A."/>
            <person name="Shotland Y."/>
            <person name="Sinha P."/>
            <person name="Wohldmann P.E."/>
            <person name="Cook L.L."/>
            <person name="Hickenbotham M.T."/>
            <person name="Eldred J."/>
            <person name="Williams D."/>
            <person name="Jones T.A."/>
            <person name="She X."/>
            <person name="Ciccarelli F.D."/>
            <person name="Izaurralde E."/>
            <person name="Taylor J."/>
            <person name="Schmutz J."/>
            <person name="Myers R.M."/>
            <person name="Cox D.R."/>
            <person name="Huang X."/>
            <person name="McPherson J.D."/>
            <person name="Mardis E.R."/>
            <person name="Clifton S.W."/>
            <person name="Warren W.C."/>
            <person name="Chinwalla A.T."/>
            <person name="Eddy S.R."/>
            <person name="Marra M.A."/>
            <person name="Ovcharenko I."/>
            <person name="Furey T.S."/>
            <person name="Miller W."/>
            <person name="Eichler E.E."/>
            <person name="Bork P."/>
            <person name="Suyama M."/>
            <person name="Torrents D."/>
            <person name="Waterston R.H."/>
            <person name="Wilson R.K."/>
        </authorList>
    </citation>
    <scope>NUCLEOTIDE SEQUENCE [LARGE SCALE GENOMIC DNA]</scope>
</reference>
<reference key="4">
    <citation type="submission" date="2005-09" db="EMBL/GenBank/DDBJ databases">
        <authorList>
            <person name="Mural R.J."/>
            <person name="Istrail S."/>
            <person name="Sutton G.G."/>
            <person name="Florea L."/>
            <person name="Halpern A.L."/>
            <person name="Mobarry C.M."/>
            <person name="Lippert R."/>
            <person name="Walenz B."/>
            <person name="Shatkay H."/>
            <person name="Dew I."/>
            <person name="Miller J.R."/>
            <person name="Flanigan M.J."/>
            <person name="Edwards N.J."/>
            <person name="Bolanos R."/>
            <person name="Fasulo D."/>
            <person name="Halldorsson B.V."/>
            <person name="Hannenhalli S."/>
            <person name="Turner R."/>
            <person name="Yooseph S."/>
            <person name="Lu F."/>
            <person name="Nusskern D.R."/>
            <person name="Shue B.C."/>
            <person name="Zheng X.H."/>
            <person name="Zhong F."/>
            <person name="Delcher A.L."/>
            <person name="Huson D.H."/>
            <person name="Kravitz S.A."/>
            <person name="Mouchard L."/>
            <person name="Reinert K."/>
            <person name="Remington K.A."/>
            <person name="Clark A.G."/>
            <person name="Waterman M.S."/>
            <person name="Eichler E.E."/>
            <person name="Adams M.D."/>
            <person name="Hunkapiller M.W."/>
            <person name="Myers E.W."/>
            <person name="Venter J.C."/>
        </authorList>
    </citation>
    <scope>NUCLEOTIDE SEQUENCE [LARGE SCALE GENOMIC DNA]</scope>
</reference>
<reference key="5">
    <citation type="journal article" date="2004" name="Genome Res.">
        <title>The status, quality, and expansion of the NIH full-length cDNA project: the Mammalian Gene Collection (MGC).</title>
        <authorList>
            <consortium name="The MGC Project Team"/>
        </authorList>
    </citation>
    <scope>NUCLEOTIDE SEQUENCE [LARGE SCALE MRNA]</scope>
    <source>
        <tissue>Brain</tissue>
        <tissue>Placenta</tissue>
    </source>
</reference>
<reference key="6">
    <citation type="journal article" date="2011" name="BMC Syst. Biol.">
        <title>Initial characterization of the human central proteome.</title>
        <authorList>
            <person name="Burkard T.R."/>
            <person name="Planyavsky M."/>
            <person name="Kaupe I."/>
            <person name="Breitwieser F.P."/>
            <person name="Buerckstuemmer T."/>
            <person name="Bennett K.L."/>
            <person name="Superti-Furga G."/>
            <person name="Colinge J."/>
        </authorList>
    </citation>
    <scope>IDENTIFICATION BY MASS SPECTROMETRY [LARGE SCALE ANALYSIS]</scope>
</reference>
<reference key="7">
    <citation type="journal article" date="2019" name="Am. J. Hum. Genet.">
        <title>Bi-allelic variants in METTL5 cause autosomal-recessive intellectual disability and microcephaly.</title>
        <authorList>
            <person name="Richard E.M."/>
            <person name="Polla D.L."/>
            <person name="Assir M.Z."/>
            <person name="Contreras M."/>
            <person name="Shahzad M."/>
            <person name="Khan A.A."/>
            <person name="Razzaq A."/>
            <person name="Akram J."/>
            <person name="Tarar M.N."/>
            <person name="Blanpied T.A."/>
            <person name="Ahmed Z.M."/>
            <person name="Abou Jamra R."/>
            <person name="Wieczorek D."/>
            <person name="van Bokhoven H."/>
            <person name="Riazuddin S."/>
            <person name="Riazuddin S."/>
        </authorList>
    </citation>
    <scope>INVOLVEMENT IN MRT72</scope>
    <scope>SUBCELLULAR LOCATION</scope>
    <scope>TISSUE SPECIFICITY</scope>
</reference>
<reference key="8">
    <citation type="journal article" date="2020" name="Cell Rep.">
        <title>Ribosome 18S m6A methyltransferase METTL5 promotes translation initiation and breast cancer cell growth.</title>
        <authorList>
            <person name="Rong B."/>
            <person name="Zhang Q."/>
            <person name="Wan J."/>
            <person name="Xing S."/>
            <person name="Dai R."/>
            <person name="Li Y."/>
            <person name="Cai J."/>
            <person name="Xie J."/>
            <person name="Song Y."/>
            <person name="Chen J."/>
            <person name="Zhang L."/>
            <person name="Yan G."/>
            <person name="Zhang W."/>
            <person name="Gao H."/>
            <person name="Han J.J."/>
            <person name="Qu Q."/>
            <person name="Ma H."/>
            <person name="Tian Y."/>
            <person name="Lan F."/>
        </authorList>
    </citation>
    <scope>FUNCTION</scope>
    <scope>CATALYTIC ACTIVITY</scope>
</reference>
<reference key="9">
    <citation type="journal article" date="2020" name="Genes Dev.">
        <title>The rRNA m6A methyltransferase METTL5 is involved in pluripotency and developmental programs.</title>
        <authorList>
            <person name="Ignatova V.V."/>
            <person name="Stolz P."/>
            <person name="Kaiser S."/>
            <person name="Gustafsson T.H."/>
            <person name="Lastres P.R."/>
            <person name="Sanz-Moreno A."/>
            <person name="Cho Y.L."/>
            <person name="Amarie O.V."/>
            <person name="Aguilar-Pimentel A."/>
            <person name="Klein-Rodewald T."/>
            <person name="Calzada-Wack J."/>
            <person name="Becker L."/>
            <person name="Marschall S."/>
            <person name="Kraiger M."/>
            <person name="Garrett L."/>
            <person name="Seisenberger C."/>
            <person name="Hoelter S.M."/>
            <person name="Borland K."/>
            <person name="Van De Logt E."/>
            <person name="Jansen P.W.T.C."/>
            <person name="Baltissen M.P."/>
            <person name="Valenta M."/>
            <person name="Vermeulen M."/>
            <person name="Wurst W."/>
            <person name="Gailus-Durner V."/>
            <person name="Fuchs H."/>
            <person name="de Angelis M.H."/>
            <person name="Rando O.J."/>
            <person name="Kellner S.M."/>
            <person name="Bultmann S."/>
            <person name="Schneider R."/>
        </authorList>
    </citation>
    <scope>FUNCTION</scope>
    <scope>CATALYTIC ACTIVITY</scope>
    <scope>INTERACTION WITH TRMT112</scope>
</reference>
<reference key="10">
    <citation type="journal article" date="2021" name="Int. J. Mol. Sci.">
        <title>Human TRMT112-Methyltransferase Network Consists of Seven Partners Interacting with a Common Co-Factor.</title>
        <authorList>
            <person name="Brumele B."/>
            <person name="Mutso M."/>
            <person name="Telanne L."/>
            <person name="Ounap K."/>
            <person name="Spunde K."/>
            <person name="Abroi A."/>
            <person name="Kurg R."/>
        </authorList>
    </citation>
    <scope>INTERACTION WITH TRMT112</scope>
</reference>
<reference key="11">
    <citation type="journal article" date="2021" name="J. Biol. Chem.">
        <title>Enzymatic characterization of three human RNA adenosine methyltransferases reveals diverse substrate affinities and reaction optima.</title>
        <authorList>
            <person name="Yu D."/>
            <person name="Kaur G."/>
            <person name="Blumenthal R.M."/>
            <person name="Zhang X."/>
            <person name="Cheng X."/>
        </authorList>
    </citation>
    <scope>FUNCTION</scope>
    <scope>CATALYTIC ACTIVITY</scope>
    <scope>BIOPHYSICOCHEMICAL PROPERTIES</scope>
    <scope>ACTIVITY REGULATION</scope>
    <scope>INTERACTION WITH TRMT112</scope>
</reference>
<reference key="12">
    <citation type="journal article" date="2022" name="J. Biol. Chem.">
        <title>The METTL5-TRMT112 N6-methyladenosine methyltransferase complex regulates mRNA translation via 18S rRNA methylation.</title>
        <authorList>
            <person name="Sepich-Poore C."/>
            <person name="Zheng Z."/>
            <person name="Schmitt E."/>
            <person name="Wen K."/>
            <person name="Zhang Z.S."/>
            <person name="Cui X.L."/>
            <person name="Dai Q."/>
            <person name="Zhu A.C."/>
            <person name="Zhang L."/>
            <person name="Sanchez Castillo A."/>
            <person name="Tan H."/>
            <person name="Peng J."/>
            <person name="Zhuang X."/>
            <person name="He C."/>
            <person name="Nachtergaele S."/>
        </authorList>
    </citation>
    <scope>FUNCTION</scope>
    <scope>CATALYTIC ACTIVITY</scope>
    <scope>INTERACTION WITH TRMT112</scope>
    <scope>MUTAGENESIS OF 126-ASN--PRO-128</scope>
    <scope>VARIANT ASP-61</scope>
    <scope>CHARACTERIZATION OF VARIANT ASP-61</scope>
</reference>
<reference evidence="12 13" key="13">
    <citation type="journal article" date="2019" name="Nucleic Acids Res.">
        <title>The human 18S rRNA m6A methyltransferase METTL5 is stabilized by TRMT112.</title>
        <authorList>
            <person name="van Tran N."/>
            <person name="Ernst F.G.M."/>
            <person name="Hawley B.R."/>
            <person name="Zorbas C."/>
            <person name="Ulryck N."/>
            <person name="Hackert P."/>
            <person name="Bohnsack K.E."/>
            <person name="Bohnsack M.T."/>
            <person name="Jaffrey S.R."/>
            <person name="Graille M."/>
            <person name="Lafontaine D.L.J."/>
        </authorList>
    </citation>
    <scope>X-RAY CRYSTALLOGRAPHY (1.60 ANGSTROMS) IN COMPLEX WITH S-ADENOSYL-L-METHIONINE AND TRMT112</scope>
    <scope>FUNCTION</scope>
    <scope>CATALYTIC ACTIVITY</scope>
    <scope>INTERACTION WITH TRMT112</scope>
</reference>
<name>METL5_HUMAN</name>
<comment type="function">
    <text evidence="1 3 4 5 7">Catalytic subunit of a heterodimer with TRMT112, which specifically methylates the 6th position of adenine in position 1832 of 18S rRNA (PubMed:31328227, PubMed:32217665, PubMed:33357433, PubMed:33428944, PubMed:35033535). N6-methylation of adenine(1832) in 18S rRNA resides in the decoding center of 18S rRNA and is required for translation and embryonic stem cells (ESCs) pluripotency and differentiation (PubMed:33357433).</text>
</comment>
<comment type="catalytic activity">
    <reaction evidence="1 3 4 5 7">
        <text>adenosine(1832) in 18S rRNA + S-adenosyl-L-methionine = N(6)-methyladenosine(1832) in 18S rRNA + S-adenosyl-L-homocysteine + H(+)</text>
        <dbReference type="Rhea" id="RHEA:62612"/>
        <dbReference type="Rhea" id="RHEA-COMP:16144"/>
        <dbReference type="Rhea" id="RHEA-COMP:16145"/>
        <dbReference type="ChEBI" id="CHEBI:15378"/>
        <dbReference type="ChEBI" id="CHEBI:57856"/>
        <dbReference type="ChEBI" id="CHEBI:59789"/>
        <dbReference type="ChEBI" id="CHEBI:74411"/>
        <dbReference type="ChEBI" id="CHEBI:74449"/>
    </reaction>
    <physiologicalReaction direction="left-to-right" evidence="1 3 4 5 7">
        <dbReference type="Rhea" id="RHEA:62613"/>
    </physiologicalReaction>
</comment>
<comment type="activity regulation">
    <text evidence="5">rRNA N6-adenosine-methyltransferase activity is inhibited by zinc.</text>
</comment>
<comment type="biophysicochemical properties">
    <kinetics>
        <KM evidence="5">1.1 uM for 18S rRNA</KM>
        <KM evidence="5">1 uM for S-adenosyl-L-methionine</KM>
        <text evidence="5">kcat is 13.1 h(-1) for 18S rRNA (PubMed:33428944). kcat is 17.6 h(-1) for S-adenosyl-L-methionine (PubMed:33428944).</text>
    </kinetics>
</comment>
<comment type="subunit">
    <text evidence="1 3 5 6 7">Heterodimer; heterodimerizes with TRMT112.</text>
</comment>
<comment type="interaction">
    <interactant intactId="EBI-12360031">
        <id>Q9NRN9</id>
    </interactant>
    <interactant intactId="EBI-373326">
        <id>Q9UI30</id>
        <label>TRMT112</label>
    </interactant>
    <organismsDiffer>false</organismsDiffer>
    <experiments>8</experiments>
</comment>
<comment type="interaction">
    <interactant intactId="EBI-12360031">
        <id>Q9NRN9</id>
    </interactant>
    <interactant intactId="EBI-722671">
        <id>O15062</id>
        <label>ZBTB5</label>
    </interactant>
    <organismsDiffer>false</organismsDiffer>
    <experiments>3</experiments>
</comment>
<comment type="subcellular location">
    <subcellularLocation>
        <location evidence="2">Nucleus</location>
    </subcellularLocation>
    <subcellularLocation>
        <location evidence="2">Presynapse</location>
    </subcellularLocation>
    <subcellularLocation>
        <location evidence="2">Postsynapse</location>
    </subcellularLocation>
</comment>
<comment type="tissue specificity">
    <text evidence="2">Expressed from very early development (8 post-conceptual weeks) and expression persists through adulthood in multiple substructures of the brain, including the cerebellar cortex, hippocampus, and striatum.</text>
</comment>
<comment type="disease" evidence="2">
    <disease id="DI-05705">
        <name>Intellectual developmental disorder, autosomal recessive 72</name>
        <acronym>MRT72</acronym>
        <description>A form of intellectual disability, a disorder characterized by significantly below average general intellectual functioning associated with impairments in adaptive behavior and manifested during the developmental period. MRT72 patients manifest moderate to severe intellectual disability, microcephaly, and dysmorphic facial features.</description>
        <dbReference type="MIM" id="618665"/>
    </disease>
    <text>The disease is caused by variants affecting the gene represented in this entry.</text>
</comment>
<comment type="similarity">
    <text evidence="10">Belongs to the methyltransferase superfamily. PrmA family.</text>
</comment>